<dbReference type="EMBL" id="CP000308">
    <property type="protein sequence ID" value="ABG15268.1"/>
    <property type="molecule type" value="Genomic_DNA"/>
</dbReference>
<dbReference type="RefSeq" id="WP_002215690.1">
    <property type="nucleotide sequence ID" value="NZ_CP009906.1"/>
</dbReference>
<dbReference type="SMR" id="Q1C2Q4"/>
<dbReference type="GeneID" id="57974438"/>
<dbReference type="KEGG" id="ypa:YPA_3306"/>
<dbReference type="Proteomes" id="UP000001971">
    <property type="component" value="Chromosome"/>
</dbReference>
<dbReference type="GO" id="GO:0005886">
    <property type="term" value="C:plasma membrane"/>
    <property type="evidence" value="ECO:0007669"/>
    <property type="project" value="UniProtKB-SubCell"/>
</dbReference>
<dbReference type="GO" id="GO:0022857">
    <property type="term" value="F:transmembrane transporter activity"/>
    <property type="evidence" value="ECO:0007669"/>
    <property type="project" value="InterPro"/>
</dbReference>
<dbReference type="Gene3D" id="1.20.1250.20">
    <property type="entry name" value="MFS general substrate transporter like domains"/>
    <property type="match status" value="2"/>
</dbReference>
<dbReference type="HAMAP" id="MF_01044">
    <property type="entry name" value="MFS_TsgA"/>
    <property type="match status" value="1"/>
</dbReference>
<dbReference type="InterPro" id="IPR011701">
    <property type="entry name" value="MFS"/>
</dbReference>
<dbReference type="InterPro" id="IPR020846">
    <property type="entry name" value="MFS_dom"/>
</dbReference>
<dbReference type="InterPro" id="IPR036259">
    <property type="entry name" value="MFS_trans_sf"/>
</dbReference>
<dbReference type="InterPro" id="IPR023528">
    <property type="entry name" value="MFS_TsgA"/>
</dbReference>
<dbReference type="InterPro" id="IPR050375">
    <property type="entry name" value="MFS_TsgA-like"/>
</dbReference>
<dbReference type="NCBIfam" id="NF002982">
    <property type="entry name" value="PRK03699.1"/>
    <property type="match status" value="1"/>
</dbReference>
<dbReference type="PANTHER" id="PTHR43702">
    <property type="entry name" value="L-FUCOSE-PROTON SYMPORTER"/>
    <property type="match status" value="1"/>
</dbReference>
<dbReference type="PANTHER" id="PTHR43702:SF3">
    <property type="entry name" value="PROTEIN TSGA"/>
    <property type="match status" value="1"/>
</dbReference>
<dbReference type="Pfam" id="PF07690">
    <property type="entry name" value="MFS_1"/>
    <property type="match status" value="1"/>
</dbReference>
<dbReference type="SUPFAM" id="SSF103473">
    <property type="entry name" value="MFS general substrate transporter"/>
    <property type="match status" value="1"/>
</dbReference>
<dbReference type="PROSITE" id="PS50850">
    <property type="entry name" value="MFS"/>
    <property type="match status" value="1"/>
</dbReference>
<name>TSGA_YERPA</name>
<evidence type="ECO:0000255" key="1">
    <source>
        <dbReference type="HAMAP-Rule" id="MF_01044"/>
    </source>
</evidence>
<proteinExistence type="inferred from homology"/>
<sequence>MNNSNRIRLTWISYLSYALTGALVIVTGIVMGNIAEYFNLPIASMSNTFTFLNAGILISIFLNAWLMEIIPLKRQLVFGFILMLIAIAGLMVGHNLMIFSISMFIFGVVSGITMSIGTFLVTHMYEGRQRGSRLLFTDSFFSMAGMIFPIAAAMLLARHIEWYWVYACIGLLYVGIFVLTLCSEFPVLGHKATDQSKPVVKEKWGVGVLFLAIAALCYILGQLGFIQWVPEYATKTFNMNISQAGQLVSNFWISYMIGMWIFSFILRFFDLQRIVTVLAAMATLAMYLFVSTDNPAYLSYYILALGFVSSAIYTTLITLGSLQTKVSSPKLVNFILTCGTVGTMLTFVVTGPIVANNGVHAALETANGLYLAVFILCLALGFFTKHRSHGHVTH</sequence>
<feature type="chain" id="PRO_1000064258" description="Protein TsgA homolog">
    <location>
        <begin position="1"/>
        <end position="394"/>
    </location>
</feature>
<feature type="transmembrane region" description="Helical" evidence="1">
    <location>
        <begin position="11"/>
        <end position="31"/>
    </location>
</feature>
<feature type="transmembrane region" description="Helical" evidence="1">
    <location>
        <begin position="51"/>
        <end position="71"/>
    </location>
</feature>
<feature type="transmembrane region" description="Helical" evidence="1">
    <location>
        <begin position="76"/>
        <end position="96"/>
    </location>
</feature>
<feature type="transmembrane region" description="Helical" evidence="1">
    <location>
        <begin position="101"/>
        <end position="121"/>
    </location>
</feature>
<feature type="transmembrane region" description="Helical" evidence="1">
    <location>
        <begin position="134"/>
        <end position="154"/>
    </location>
</feature>
<feature type="transmembrane region" description="Helical" evidence="1">
    <location>
        <begin position="162"/>
        <end position="182"/>
    </location>
</feature>
<feature type="transmembrane region" description="Helical" evidence="1">
    <location>
        <begin position="206"/>
        <end position="226"/>
    </location>
</feature>
<feature type="transmembrane region" description="Helical" evidence="1">
    <location>
        <begin position="246"/>
        <end position="266"/>
    </location>
</feature>
<feature type="transmembrane region" description="Helical" evidence="1">
    <location>
        <begin position="274"/>
        <end position="294"/>
    </location>
</feature>
<feature type="transmembrane region" description="Helical" evidence="1">
    <location>
        <begin position="302"/>
        <end position="322"/>
    </location>
</feature>
<feature type="transmembrane region" description="Helical" evidence="1">
    <location>
        <begin position="334"/>
        <end position="354"/>
    </location>
</feature>
<feature type="transmembrane region" description="Helical" evidence="1">
    <location>
        <begin position="363"/>
        <end position="383"/>
    </location>
</feature>
<gene>
    <name evidence="1" type="primary">tsgA</name>
    <name type="ordered locus">YPA_3306</name>
</gene>
<accession>Q1C2Q4</accession>
<reference key="1">
    <citation type="journal article" date="2006" name="J. Bacteriol.">
        <title>Complete genome sequence of Yersinia pestis strains Antiqua and Nepal516: evidence of gene reduction in an emerging pathogen.</title>
        <authorList>
            <person name="Chain P.S.G."/>
            <person name="Hu P."/>
            <person name="Malfatti S.A."/>
            <person name="Radnedge L."/>
            <person name="Larimer F."/>
            <person name="Vergez L.M."/>
            <person name="Worsham P."/>
            <person name="Chu M.C."/>
            <person name="Andersen G.L."/>
        </authorList>
    </citation>
    <scope>NUCLEOTIDE SEQUENCE [LARGE SCALE GENOMIC DNA]</scope>
    <source>
        <strain>Antiqua</strain>
    </source>
</reference>
<comment type="subcellular location">
    <subcellularLocation>
        <location evidence="1">Cell inner membrane</location>
        <topology evidence="1">Multi-pass membrane protein</topology>
    </subcellularLocation>
</comment>
<comment type="similarity">
    <text evidence="1">Belongs to the major facilitator superfamily. TsgA family.</text>
</comment>
<protein>
    <recommendedName>
        <fullName evidence="1">Protein TsgA homolog</fullName>
    </recommendedName>
</protein>
<keyword id="KW-0997">Cell inner membrane</keyword>
<keyword id="KW-1003">Cell membrane</keyword>
<keyword id="KW-0472">Membrane</keyword>
<keyword id="KW-0812">Transmembrane</keyword>
<keyword id="KW-1133">Transmembrane helix</keyword>
<organism>
    <name type="scientific">Yersinia pestis bv. Antiqua (strain Antiqua)</name>
    <dbReference type="NCBI Taxonomy" id="360102"/>
    <lineage>
        <taxon>Bacteria</taxon>
        <taxon>Pseudomonadati</taxon>
        <taxon>Pseudomonadota</taxon>
        <taxon>Gammaproteobacteria</taxon>
        <taxon>Enterobacterales</taxon>
        <taxon>Yersiniaceae</taxon>
        <taxon>Yersinia</taxon>
    </lineage>
</organism>